<evidence type="ECO:0000305" key="1"/>
<gene>
    <name type="primary">tdcR</name>
    <name type="ordered locus">b3119</name>
    <name type="ordered locus">JW5525</name>
</gene>
<reference key="1">
    <citation type="journal article" date="1989" name="Nucleic Acids Res.">
        <title>The complete nucleotide sequence of the tdc region of Escherichia coli.</title>
        <authorList>
            <person name="Schweizer H."/>
            <person name="Datta P."/>
        </authorList>
    </citation>
    <scope>NUCLEOTIDE SEQUENCE [GENOMIC DNA]</scope>
    <source>
        <strain>K12 / W3110 / ATCC 27325 / DSM 5911</strain>
    </source>
</reference>
<reference key="2">
    <citation type="journal article" date="1989" name="Mol. Gen. Genet.">
        <title>Identification and DNA sequence of tdcR, a positive regulatory gene of the tdc operon of Escherichia coli.</title>
        <authorList>
            <person name="Schweizer H.P."/>
            <person name="Datta P."/>
        </authorList>
    </citation>
    <scope>NUCLEOTIDE SEQUENCE [GENOMIC DNA]</scope>
    <source>
        <strain>K12 / W3110 / ATCC 27325 / DSM 5911</strain>
    </source>
</reference>
<reference key="3">
    <citation type="journal article" date="1997" name="Science">
        <title>The complete genome sequence of Escherichia coli K-12.</title>
        <authorList>
            <person name="Blattner F.R."/>
            <person name="Plunkett G. III"/>
            <person name="Bloch C.A."/>
            <person name="Perna N.T."/>
            <person name="Burland V."/>
            <person name="Riley M."/>
            <person name="Collado-Vides J."/>
            <person name="Glasner J.D."/>
            <person name="Rode C.K."/>
            <person name="Mayhew G.F."/>
            <person name="Gregor J."/>
            <person name="Davis N.W."/>
            <person name="Kirkpatrick H.A."/>
            <person name="Goeden M.A."/>
            <person name="Rose D.J."/>
            <person name="Mau B."/>
            <person name="Shao Y."/>
        </authorList>
    </citation>
    <scope>NUCLEOTIDE SEQUENCE [LARGE SCALE GENOMIC DNA]</scope>
    <source>
        <strain>K12 / MG1655 / ATCC 47076</strain>
    </source>
</reference>
<reference key="4">
    <citation type="journal article" date="2006" name="Mol. Syst. Biol.">
        <title>Highly accurate genome sequences of Escherichia coli K-12 strains MG1655 and W3110.</title>
        <authorList>
            <person name="Hayashi K."/>
            <person name="Morooka N."/>
            <person name="Yamamoto Y."/>
            <person name="Fujita K."/>
            <person name="Isono K."/>
            <person name="Choi S."/>
            <person name="Ohtsubo E."/>
            <person name="Baba T."/>
            <person name="Wanner B.L."/>
            <person name="Mori H."/>
            <person name="Horiuchi T."/>
        </authorList>
    </citation>
    <scope>NUCLEOTIDE SEQUENCE [LARGE SCALE GENOMIC DNA]</scope>
    <source>
        <strain>K12 / W3110 / ATCC 27325 / DSM 5911</strain>
    </source>
</reference>
<reference key="5">
    <citation type="journal article" date="1994" name="J. Bacteriol.">
        <title>Functional analysis of the tdcABC promoter of Escherichia coli: roles of TdcA and TdcR.</title>
        <authorList>
            <person name="Hagewood B.T."/>
            <person name="Ganduri Y.L."/>
            <person name="Datta P."/>
        </authorList>
    </citation>
    <scope>IDENTIFICATION OF START CODON</scope>
</reference>
<protein>
    <recommendedName>
        <fullName>Threonine dehydratase operon activator protein</fullName>
    </recommendedName>
</protein>
<comment type="function">
    <text>Probable trans-acting positive activator for the tdc operon.</text>
</comment>
<comment type="sequence caution" evidence="1">
    <conflict type="erroneous initiation">
        <sequence resource="EMBL-CDS" id="AAA57923"/>
    </conflict>
    <text>Extended N-terminus.</text>
</comment>
<comment type="sequence caution" evidence="1">
    <conflict type="erroneous initiation">
        <sequence resource="EMBL-CDS" id="CAA32591"/>
    </conflict>
    <text>Extended N-terminus.</text>
</comment>
<comment type="sequence caution" evidence="1">
    <conflict type="erroneous initiation">
        <sequence resource="EMBL-CDS" id="CAA34464"/>
    </conflict>
    <text>Extended N-terminus.</text>
</comment>
<name>TDCR_ECOLI</name>
<keyword id="KW-0010">Activator</keyword>
<keyword id="KW-0238">DNA-binding</keyword>
<keyword id="KW-1185">Reference proteome</keyword>
<keyword id="KW-0804">Transcription</keyword>
<keyword id="KW-0805">Transcription regulation</keyword>
<dbReference type="EMBL" id="X14430">
    <property type="protein sequence ID" value="CAA32591.1"/>
    <property type="status" value="ALT_INIT"/>
    <property type="molecule type" value="Genomic_DNA"/>
</dbReference>
<dbReference type="EMBL" id="X16445">
    <property type="protein sequence ID" value="CAA34464.1"/>
    <property type="status" value="ALT_INIT"/>
    <property type="molecule type" value="Genomic_DNA"/>
</dbReference>
<dbReference type="EMBL" id="U18997">
    <property type="protein sequence ID" value="AAA57923.1"/>
    <property type="status" value="ALT_INIT"/>
    <property type="molecule type" value="Genomic_DNA"/>
</dbReference>
<dbReference type="EMBL" id="U00096">
    <property type="protein sequence ID" value="AAC76154.2"/>
    <property type="molecule type" value="Genomic_DNA"/>
</dbReference>
<dbReference type="EMBL" id="AP009048">
    <property type="protein sequence ID" value="BAE77168.1"/>
    <property type="molecule type" value="Genomic_DNA"/>
</dbReference>
<dbReference type="PIR" id="D65101">
    <property type="entry name" value="BVECTD"/>
</dbReference>
<dbReference type="RefSeq" id="NP_417589.4">
    <property type="nucleotide sequence ID" value="NC_000913.3"/>
</dbReference>
<dbReference type="RefSeq" id="WP_001301311.1">
    <property type="nucleotide sequence ID" value="NZ_LN832404.1"/>
</dbReference>
<dbReference type="SMR" id="P11866"/>
<dbReference type="BioGRID" id="4262421">
    <property type="interactions" value="124"/>
</dbReference>
<dbReference type="FunCoup" id="P11866">
    <property type="interactions" value="82"/>
</dbReference>
<dbReference type="STRING" id="511145.b3119"/>
<dbReference type="PaxDb" id="511145-b3119"/>
<dbReference type="EnsemblBacteria" id="AAC76154">
    <property type="protein sequence ID" value="AAC76154"/>
    <property type="gene ID" value="b3119"/>
</dbReference>
<dbReference type="GeneID" id="944907"/>
<dbReference type="KEGG" id="ecj:JW5525"/>
<dbReference type="KEGG" id="eco:b3119"/>
<dbReference type="PATRIC" id="fig|511145.12.peg.3213"/>
<dbReference type="EchoBASE" id="EB0985"/>
<dbReference type="HOGENOM" id="CLU_2715938_0_0_6"/>
<dbReference type="InParanoid" id="P11866"/>
<dbReference type="OMA" id="HDRTSFC"/>
<dbReference type="BioCyc" id="EcoCyc:PD03292"/>
<dbReference type="PRO" id="PR:P11866"/>
<dbReference type="Proteomes" id="UP000000625">
    <property type="component" value="Chromosome"/>
</dbReference>
<dbReference type="GO" id="GO:0003677">
    <property type="term" value="F:DNA binding"/>
    <property type="evidence" value="ECO:0007669"/>
    <property type="project" value="UniProtKB-KW"/>
</dbReference>
<dbReference type="GO" id="GO:0045893">
    <property type="term" value="P:positive regulation of DNA-templated transcription"/>
    <property type="evidence" value="ECO:0000314"/>
    <property type="project" value="EcoCyc"/>
</dbReference>
<dbReference type="NCBIfam" id="NF008507">
    <property type="entry name" value="PRK11424.1"/>
    <property type="match status" value="1"/>
</dbReference>
<sequence length="72" mass="8608">MSKFSNFIINKPFSVINNAACHIFSRYLLENKHLFYQYFKISNTCIDHLEQLINVNFFSSDRTSFCECNRFP</sequence>
<organism>
    <name type="scientific">Escherichia coli (strain K12)</name>
    <dbReference type="NCBI Taxonomy" id="83333"/>
    <lineage>
        <taxon>Bacteria</taxon>
        <taxon>Pseudomonadati</taxon>
        <taxon>Pseudomonadota</taxon>
        <taxon>Gammaproteobacteria</taxon>
        <taxon>Enterobacterales</taxon>
        <taxon>Enterobacteriaceae</taxon>
        <taxon>Escherichia</taxon>
    </lineage>
</organism>
<feature type="chain" id="PRO_0000072472" description="Threonine dehydratase operon activator protein">
    <location>
        <begin position="1"/>
        <end position="72"/>
    </location>
</feature>
<proteinExistence type="predicted"/>
<accession>P11866</accession>
<accession>P76667</accession>
<accession>Q2M988</accession>